<name>MURI_STRE4</name>
<sequence length="264" mass="28813">MDNRPIGFLDSGVGGLTVVSELMRQLPHEKIIYIGDSARAPYGPRPAEQIREYTWELVRFLLTKHVKMIVFACNTATAVAWEEVKEALDIPVLGVILPGASAAIKATSGGKVGVIGTSMTISSGIYQEKIQLLAPTVQVTSLACPRFVPIVESNEISSSVAKKIVYETLAPLVGKIDTLVLGCTHYPLLRTIIQNVLGPQVKLIDSGAECVRDISVLLNYFEINGSRDDEHRRHHFYTTAGSDSFQAIASAWLNQTIDVEHVTL</sequence>
<reference key="1">
    <citation type="journal article" date="2009" name="PLoS Pathog.">
        <title>Genomic evidence for the evolution of Streptococcus equi: host restriction, increased virulence, and genetic exchange with human pathogens.</title>
        <authorList>
            <person name="Holden M.T.G."/>
            <person name="Heather Z."/>
            <person name="Paillot R."/>
            <person name="Steward K.F."/>
            <person name="Webb K."/>
            <person name="Ainslie F."/>
            <person name="Jourdan T."/>
            <person name="Bason N.C."/>
            <person name="Holroyd N.E."/>
            <person name="Mungall K."/>
            <person name="Quail M.A."/>
            <person name="Sanders M."/>
            <person name="Simmonds M."/>
            <person name="Willey D."/>
            <person name="Brooks K."/>
            <person name="Aanensen D.M."/>
            <person name="Spratt B.G."/>
            <person name="Jolley K.A."/>
            <person name="Maiden M.C.J."/>
            <person name="Kehoe M."/>
            <person name="Chanter N."/>
            <person name="Bentley S.D."/>
            <person name="Robinson C."/>
            <person name="Maskell D.J."/>
            <person name="Parkhill J."/>
            <person name="Waller A.S."/>
        </authorList>
    </citation>
    <scope>NUCLEOTIDE SEQUENCE [LARGE SCALE GENOMIC DNA]</scope>
    <source>
        <strain>4047</strain>
    </source>
</reference>
<dbReference type="EC" id="5.1.1.3" evidence="1"/>
<dbReference type="EMBL" id="FM204883">
    <property type="protein sequence ID" value="CAW95041.1"/>
    <property type="molecule type" value="Genomic_DNA"/>
</dbReference>
<dbReference type="SMR" id="C0M7R0"/>
<dbReference type="KEGG" id="seu:SEQ_1868"/>
<dbReference type="HOGENOM" id="CLU_052344_0_2_9"/>
<dbReference type="OrthoDB" id="9801055at2"/>
<dbReference type="UniPathway" id="UPA00219"/>
<dbReference type="Proteomes" id="UP000001365">
    <property type="component" value="Chromosome"/>
</dbReference>
<dbReference type="GO" id="GO:0008881">
    <property type="term" value="F:glutamate racemase activity"/>
    <property type="evidence" value="ECO:0007669"/>
    <property type="project" value="UniProtKB-UniRule"/>
</dbReference>
<dbReference type="GO" id="GO:0071555">
    <property type="term" value="P:cell wall organization"/>
    <property type="evidence" value="ECO:0007669"/>
    <property type="project" value="UniProtKB-KW"/>
</dbReference>
<dbReference type="GO" id="GO:0009252">
    <property type="term" value="P:peptidoglycan biosynthetic process"/>
    <property type="evidence" value="ECO:0007669"/>
    <property type="project" value="UniProtKB-UniRule"/>
</dbReference>
<dbReference type="GO" id="GO:0008360">
    <property type="term" value="P:regulation of cell shape"/>
    <property type="evidence" value="ECO:0007669"/>
    <property type="project" value="UniProtKB-KW"/>
</dbReference>
<dbReference type="FunFam" id="3.40.50.1860:FF:000002">
    <property type="entry name" value="Glutamate racemase"/>
    <property type="match status" value="1"/>
</dbReference>
<dbReference type="Gene3D" id="3.40.50.1860">
    <property type="match status" value="2"/>
</dbReference>
<dbReference type="HAMAP" id="MF_00258">
    <property type="entry name" value="Glu_racemase"/>
    <property type="match status" value="1"/>
</dbReference>
<dbReference type="InterPro" id="IPR015942">
    <property type="entry name" value="Asp/Glu/hydantoin_racemase"/>
</dbReference>
<dbReference type="InterPro" id="IPR001920">
    <property type="entry name" value="Asp/Glu_race"/>
</dbReference>
<dbReference type="InterPro" id="IPR033134">
    <property type="entry name" value="Asp/Glu_racemase_AS_2"/>
</dbReference>
<dbReference type="InterPro" id="IPR004391">
    <property type="entry name" value="Glu_race"/>
</dbReference>
<dbReference type="NCBIfam" id="TIGR00067">
    <property type="entry name" value="glut_race"/>
    <property type="match status" value="1"/>
</dbReference>
<dbReference type="NCBIfam" id="NF002035">
    <property type="entry name" value="PRK00865.1-3"/>
    <property type="match status" value="1"/>
</dbReference>
<dbReference type="PANTHER" id="PTHR21198">
    <property type="entry name" value="GLUTAMATE RACEMASE"/>
    <property type="match status" value="1"/>
</dbReference>
<dbReference type="PANTHER" id="PTHR21198:SF2">
    <property type="entry name" value="GLUTAMATE RACEMASE"/>
    <property type="match status" value="1"/>
</dbReference>
<dbReference type="Pfam" id="PF01177">
    <property type="entry name" value="Asp_Glu_race"/>
    <property type="match status" value="1"/>
</dbReference>
<dbReference type="SUPFAM" id="SSF53681">
    <property type="entry name" value="Aspartate/glutamate racemase"/>
    <property type="match status" value="2"/>
</dbReference>
<dbReference type="PROSITE" id="PS00924">
    <property type="entry name" value="ASP_GLU_RACEMASE_2"/>
    <property type="match status" value="1"/>
</dbReference>
<keyword id="KW-0133">Cell shape</keyword>
<keyword id="KW-0961">Cell wall biogenesis/degradation</keyword>
<keyword id="KW-0413">Isomerase</keyword>
<keyword id="KW-0573">Peptidoglycan synthesis</keyword>
<gene>
    <name evidence="1" type="primary">murI</name>
    <name type="ordered locus">SEQ_1868</name>
</gene>
<feature type="chain" id="PRO_1000125619" description="Glutamate racemase">
    <location>
        <begin position="1"/>
        <end position="264"/>
    </location>
</feature>
<feature type="active site" description="Proton donor/acceptor" evidence="1">
    <location>
        <position position="73"/>
    </location>
</feature>
<feature type="active site" description="Proton donor/acceptor" evidence="1">
    <location>
        <position position="183"/>
    </location>
</feature>
<feature type="binding site" evidence="1">
    <location>
        <begin position="10"/>
        <end position="11"/>
    </location>
    <ligand>
        <name>substrate</name>
    </ligand>
</feature>
<feature type="binding site" evidence="1">
    <location>
        <begin position="42"/>
        <end position="43"/>
    </location>
    <ligand>
        <name>substrate</name>
    </ligand>
</feature>
<feature type="binding site" evidence="1">
    <location>
        <begin position="74"/>
        <end position="75"/>
    </location>
    <ligand>
        <name>substrate</name>
    </ligand>
</feature>
<feature type="binding site" evidence="1">
    <location>
        <begin position="184"/>
        <end position="185"/>
    </location>
    <ligand>
        <name>substrate</name>
    </ligand>
</feature>
<evidence type="ECO:0000255" key="1">
    <source>
        <dbReference type="HAMAP-Rule" id="MF_00258"/>
    </source>
</evidence>
<accession>C0M7R0</accession>
<comment type="function">
    <text evidence="1">Provides the (R)-glutamate required for cell wall biosynthesis.</text>
</comment>
<comment type="catalytic activity">
    <reaction evidence="1">
        <text>L-glutamate = D-glutamate</text>
        <dbReference type="Rhea" id="RHEA:12813"/>
        <dbReference type="ChEBI" id="CHEBI:29985"/>
        <dbReference type="ChEBI" id="CHEBI:29986"/>
        <dbReference type="EC" id="5.1.1.3"/>
    </reaction>
</comment>
<comment type="pathway">
    <text evidence="1">Cell wall biogenesis; peptidoglycan biosynthesis.</text>
</comment>
<comment type="similarity">
    <text evidence="1">Belongs to the aspartate/glutamate racemases family.</text>
</comment>
<organism>
    <name type="scientific">Streptococcus equi subsp. equi (strain 4047)</name>
    <dbReference type="NCBI Taxonomy" id="553482"/>
    <lineage>
        <taxon>Bacteria</taxon>
        <taxon>Bacillati</taxon>
        <taxon>Bacillota</taxon>
        <taxon>Bacilli</taxon>
        <taxon>Lactobacillales</taxon>
        <taxon>Streptococcaceae</taxon>
        <taxon>Streptococcus</taxon>
    </lineage>
</organism>
<proteinExistence type="inferred from homology"/>
<protein>
    <recommendedName>
        <fullName evidence="1">Glutamate racemase</fullName>
        <ecNumber evidence="1">5.1.1.3</ecNumber>
    </recommendedName>
</protein>